<keyword id="KW-0067">ATP-binding</keyword>
<keyword id="KW-0997">Cell inner membrane</keyword>
<keyword id="KW-1003">Cell membrane</keyword>
<keyword id="KW-0472">Membrane</keyword>
<keyword id="KW-0547">Nucleotide-binding</keyword>
<keyword id="KW-0918">Phosphonate transport</keyword>
<keyword id="KW-1185">Reference proteome</keyword>
<keyword id="KW-1278">Translocase</keyword>
<keyword id="KW-0813">Transport</keyword>
<reference key="1">
    <citation type="journal article" date="2000" name="Nature">
        <title>Complete genome sequence of Pseudomonas aeruginosa PAO1, an opportunistic pathogen.</title>
        <authorList>
            <person name="Stover C.K."/>
            <person name="Pham X.-Q.T."/>
            <person name="Erwin A.L."/>
            <person name="Mizoguchi S.D."/>
            <person name="Warrener P."/>
            <person name="Hickey M.J."/>
            <person name="Brinkman F.S.L."/>
            <person name="Hufnagle W.O."/>
            <person name="Kowalik D.J."/>
            <person name="Lagrou M."/>
            <person name="Garber R.L."/>
            <person name="Goltry L."/>
            <person name="Tolentino E."/>
            <person name="Westbrock-Wadman S."/>
            <person name="Yuan Y."/>
            <person name="Brody L.L."/>
            <person name="Coulter S.N."/>
            <person name="Folger K.R."/>
            <person name="Kas A."/>
            <person name="Larbig K."/>
            <person name="Lim R.M."/>
            <person name="Smith K.A."/>
            <person name="Spencer D.H."/>
            <person name="Wong G.K.-S."/>
            <person name="Wu Z."/>
            <person name="Paulsen I.T."/>
            <person name="Reizer J."/>
            <person name="Saier M.H. Jr."/>
            <person name="Hancock R.E.W."/>
            <person name="Lory S."/>
            <person name="Olson M.V."/>
        </authorList>
    </citation>
    <scope>NUCLEOTIDE SEQUENCE [LARGE SCALE GENOMIC DNA]</scope>
    <source>
        <strain>ATCC 15692 / DSM 22644 / CIP 104116 / JCM 14847 / LMG 12228 / 1C / PRS 101 / PAO1</strain>
    </source>
</reference>
<organism>
    <name type="scientific">Pseudomonas aeruginosa (strain ATCC 15692 / DSM 22644 / CIP 104116 / JCM 14847 / LMG 12228 / 1C / PRS 101 / PAO1)</name>
    <dbReference type="NCBI Taxonomy" id="208964"/>
    <lineage>
        <taxon>Bacteria</taxon>
        <taxon>Pseudomonadati</taxon>
        <taxon>Pseudomonadota</taxon>
        <taxon>Gammaproteobacteria</taxon>
        <taxon>Pseudomonadales</taxon>
        <taxon>Pseudomonadaceae</taxon>
        <taxon>Pseudomonas</taxon>
    </lineage>
</organism>
<name>PHNC2_PSEAE</name>
<gene>
    <name evidence="1" type="primary">phnC2</name>
    <name type="ordered locus">PA3384</name>
</gene>
<protein>
    <recommendedName>
        <fullName evidence="1">Phosphonates import ATP-binding protein PhnC 2</fullName>
        <ecNumber evidence="1">7.3.2.2</ecNumber>
    </recommendedName>
</protein>
<sequence length="278" mass="30276">MSAVIRVDSLNKTFARKQALFNLRLEIQAGEMVALIGASGSGKSTLLRHVAGLARCDRDNGGSIDVLGRRLQASGRLSGEVRRLRADIGYIFQQFNLVNRLSVLDNVLLGFLGRMPRWRGSLGLFSAEQKRQALEALARVGLADFAGQRASTLSGGQQQRVAIARALTQKAEVILADEPIASLDPESARKVMDILADINRHDGKTVVVTLHQVDYALRYCPRAVALKGGRILFDGSSEYLSEGFLNELYGAEGDTPLLFSDRARRGAESQPELTLARA</sequence>
<feature type="chain" id="PRO_0000092719" description="Phosphonates import ATP-binding protein PhnC 2">
    <location>
        <begin position="1"/>
        <end position="278"/>
    </location>
</feature>
<feature type="domain" description="ABC transporter" evidence="1">
    <location>
        <begin position="5"/>
        <end position="253"/>
    </location>
</feature>
<feature type="binding site" evidence="1">
    <location>
        <begin position="37"/>
        <end position="44"/>
    </location>
    <ligand>
        <name>ATP</name>
        <dbReference type="ChEBI" id="CHEBI:30616"/>
    </ligand>
</feature>
<accession>Q9HYL7</accession>
<proteinExistence type="inferred from homology"/>
<dbReference type="EC" id="7.3.2.2" evidence="1"/>
<dbReference type="EMBL" id="AE004091">
    <property type="protein sequence ID" value="AAG06772.1"/>
    <property type="molecule type" value="Genomic_DNA"/>
</dbReference>
<dbReference type="PIR" id="B83225">
    <property type="entry name" value="B83225"/>
</dbReference>
<dbReference type="SMR" id="Q9HYL7"/>
<dbReference type="FunCoup" id="Q9HYL7">
    <property type="interactions" value="198"/>
</dbReference>
<dbReference type="STRING" id="208964.PA3384"/>
<dbReference type="PaxDb" id="208964-PA3384"/>
<dbReference type="KEGG" id="pae:PA3384"/>
<dbReference type="PATRIC" id="fig|208964.12.peg.3543"/>
<dbReference type="PseudoCAP" id="PA3384"/>
<dbReference type="HOGENOM" id="CLU_000604_1_22_6"/>
<dbReference type="InParanoid" id="Q9HYL7"/>
<dbReference type="OrthoDB" id="9802264at2"/>
<dbReference type="PhylomeDB" id="Q9HYL7"/>
<dbReference type="BioCyc" id="PAER208964:G1FZ6-3450-MONOMER"/>
<dbReference type="Proteomes" id="UP000002438">
    <property type="component" value="Chromosome"/>
</dbReference>
<dbReference type="GO" id="GO:0005886">
    <property type="term" value="C:plasma membrane"/>
    <property type="evidence" value="ECO:0007669"/>
    <property type="project" value="UniProtKB-SubCell"/>
</dbReference>
<dbReference type="GO" id="GO:0015416">
    <property type="term" value="F:ABC-type phosphonate transporter activity"/>
    <property type="evidence" value="ECO:0007669"/>
    <property type="project" value="UniProtKB-EC"/>
</dbReference>
<dbReference type="GO" id="GO:0005524">
    <property type="term" value="F:ATP binding"/>
    <property type="evidence" value="ECO:0007669"/>
    <property type="project" value="UniProtKB-KW"/>
</dbReference>
<dbReference type="GO" id="GO:0016887">
    <property type="term" value="F:ATP hydrolysis activity"/>
    <property type="evidence" value="ECO:0007669"/>
    <property type="project" value="InterPro"/>
</dbReference>
<dbReference type="CDD" id="cd03256">
    <property type="entry name" value="ABC_PhnC_transporter"/>
    <property type="match status" value="1"/>
</dbReference>
<dbReference type="Gene3D" id="3.40.50.300">
    <property type="entry name" value="P-loop containing nucleotide triphosphate hydrolases"/>
    <property type="match status" value="1"/>
</dbReference>
<dbReference type="InterPro" id="IPR003593">
    <property type="entry name" value="AAA+_ATPase"/>
</dbReference>
<dbReference type="InterPro" id="IPR003439">
    <property type="entry name" value="ABC_transporter-like_ATP-bd"/>
</dbReference>
<dbReference type="InterPro" id="IPR017871">
    <property type="entry name" value="ABC_transporter-like_CS"/>
</dbReference>
<dbReference type="InterPro" id="IPR012693">
    <property type="entry name" value="ABC_transpr_PhnC"/>
</dbReference>
<dbReference type="InterPro" id="IPR050086">
    <property type="entry name" value="MetN_ABC_transporter-like"/>
</dbReference>
<dbReference type="InterPro" id="IPR027417">
    <property type="entry name" value="P-loop_NTPase"/>
</dbReference>
<dbReference type="NCBIfam" id="TIGR02315">
    <property type="entry name" value="ABC_phnC"/>
    <property type="match status" value="1"/>
</dbReference>
<dbReference type="PANTHER" id="PTHR43166">
    <property type="entry name" value="AMINO ACID IMPORT ATP-BINDING PROTEIN"/>
    <property type="match status" value="1"/>
</dbReference>
<dbReference type="PANTHER" id="PTHR43166:SF6">
    <property type="entry name" value="PHOSPHONATES IMPORT ATP-BINDING PROTEIN PHNC"/>
    <property type="match status" value="1"/>
</dbReference>
<dbReference type="Pfam" id="PF00005">
    <property type="entry name" value="ABC_tran"/>
    <property type="match status" value="1"/>
</dbReference>
<dbReference type="SMART" id="SM00382">
    <property type="entry name" value="AAA"/>
    <property type="match status" value="1"/>
</dbReference>
<dbReference type="SUPFAM" id="SSF52540">
    <property type="entry name" value="P-loop containing nucleoside triphosphate hydrolases"/>
    <property type="match status" value="1"/>
</dbReference>
<dbReference type="PROSITE" id="PS00211">
    <property type="entry name" value="ABC_TRANSPORTER_1"/>
    <property type="match status" value="1"/>
</dbReference>
<dbReference type="PROSITE" id="PS50893">
    <property type="entry name" value="ABC_TRANSPORTER_2"/>
    <property type="match status" value="1"/>
</dbReference>
<dbReference type="PROSITE" id="PS51249">
    <property type="entry name" value="PHNC"/>
    <property type="match status" value="1"/>
</dbReference>
<comment type="function">
    <text evidence="1">Part of the ABC transporter complex PhnCDE involved in phosphonates import. Responsible for energy coupling to the transport system.</text>
</comment>
<comment type="catalytic activity">
    <reaction evidence="1">
        <text>phosphonate(out) + ATP + H2O = phosphonate(in) + ADP + phosphate + H(+)</text>
        <dbReference type="Rhea" id="RHEA:18065"/>
        <dbReference type="ChEBI" id="CHEBI:15377"/>
        <dbReference type="ChEBI" id="CHEBI:15378"/>
        <dbReference type="ChEBI" id="CHEBI:16215"/>
        <dbReference type="ChEBI" id="CHEBI:30616"/>
        <dbReference type="ChEBI" id="CHEBI:43474"/>
        <dbReference type="ChEBI" id="CHEBI:456216"/>
        <dbReference type="EC" id="7.3.2.2"/>
    </reaction>
</comment>
<comment type="subunit">
    <text evidence="1">The complex is composed of two ATP-binding proteins (PhnC), two transmembrane proteins (PhnE) and a solute-binding protein (PhnD).</text>
</comment>
<comment type="subcellular location">
    <subcellularLocation>
        <location evidence="1">Cell inner membrane</location>
        <topology evidence="1">Peripheral membrane protein</topology>
    </subcellularLocation>
</comment>
<comment type="similarity">
    <text evidence="1">Belongs to the ABC transporter superfamily. Phosphonates importer (TC 3.A.1.9.1) family.</text>
</comment>
<evidence type="ECO:0000255" key="1">
    <source>
        <dbReference type="HAMAP-Rule" id="MF_01713"/>
    </source>
</evidence>